<comment type="function">
    <text evidence="1">Confers resistance to heavy metal ions (e.g. cadmium (CdCl(2)) and copper (CuCl(2))) by chelating them at the plasma membrane of root cells, thus stopping their entry and reducing their accumulation.</text>
</comment>
<comment type="subcellular location">
    <subcellularLocation>
        <location evidence="1">Cell membrane</location>
        <topology evidence="2">Single-pass membrane protein</topology>
    </subcellularLocation>
    <subcellularLocation>
        <location evidence="1">Secreted</location>
        <location evidence="1">Cell wall</location>
    </subcellularLocation>
</comment>
<comment type="similarity">
    <text evidence="4">Belongs to the CYSTM1 family.</text>
</comment>
<proteinExistence type="inferred from homology"/>
<evidence type="ECO:0000250" key="1">
    <source>
        <dbReference type="UniProtKB" id="A9ZPI1"/>
    </source>
</evidence>
<evidence type="ECO:0000255" key="2"/>
<evidence type="ECO:0000303" key="3">
    <source>
    </source>
</evidence>
<evidence type="ECO:0000305" key="4"/>
<name>CDT1_MISSI</name>
<gene>
    <name evidence="3" type="primary">CDT1</name>
</gene>
<sequence length="55" mass="6272">MYNAPSAQEMSYSDHVQRRHEEKGCLYACVFTALCCFCCYETCECCLDCLCCCCS</sequence>
<keyword id="KW-1003">Cell membrane</keyword>
<keyword id="KW-0134">Cell wall</keyword>
<keyword id="KW-0472">Membrane</keyword>
<keyword id="KW-0479">Metal-binding</keyword>
<keyword id="KW-0964">Secreted</keyword>
<keyword id="KW-0346">Stress response</keyword>
<keyword id="KW-0812">Transmembrane</keyword>
<keyword id="KW-1133">Transmembrane helix</keyword>
<protein>
    <recommendedName>
        <fullName evidence="3">Protein CADMIUM TOLERANCE 1</fullName>
        <shortName evidence="3">Cd tolerant 1</shortName>
        <shortName evidence="3">MsCDT1</shortName>
    </recommendedName>
</protein>
<dbReference type="EMBL" id="AB426478">
    <property type="protein sequence ID" value="BAG70356.1"/>
    <property type="molecule type" value="mRNA"/>
</dbReference>
<dbReference type="GO" id="GO:0005576">
    <property type="term" value="C:extracellular region"/>
    <property type="evidence" value="ECO:0007669"/>
    <property type="project" value="UniProtKB-KW"/>
</dbReference>
<dbReference type="GO" id="GO:0009505">
    <property type="term" value="C:plant-type cell wall"/>
    <property type="evidence" value="ECO:0000250"/>
    <property type="project" value="UniProtKB"/>
</dbReference>
<dbReference type="GO" id="GO:0005886">
    <property type="term" value="C:plasma membrane"/>
    <property type="evidence" value="ECO:0000250"/>
    <property type="project" value="UniProtKB"/>
</dbReference>
<dbReference type="GO" id="GO:0046872">
    <property type="term" value="F:metal ion binding"/>
    <property type="evidence" value="ECO:0000250"/>
    <property type="project" value="UniProtKB"/>
</dbReference>
<dbReference type="GO" id="GO:0140487">
    <property type="term" value="F:metal ion sequestering activity"/>
    <property type="evidence" value="ECO:0000250"/>
    <property type="project" value="UniProtKB"/>
</dbReference>
<dbReference type="GO" id="GO:1990748">
    <property type="term" value="P:cellular detoxification"/>
    <property type="evidence" value="ECO:0000250"/>
    <property type="project" value="UniProtKB"/>
</dbReference>
<dbReference type="GO" id="GO:0071585">
    <property type="term" value="P:detoxification of cadmium ion"/>
    <property type="evidence" value="ECO:0000250"/>
    <property type="project" value="UniProtKB"/>
</dbReference>
<dbReference type="GO" id="GO:0010273">
    <property type="term" value="P:detoxification of copper ion"/>
    <property type="evidence" value="ECO:0000250"/>
    <property type="project" value="UniProtKB"/>
</dbReference>
<dbReference type="InterPro" id="IPR051671">
    <property type="entry name" value="CYSTM1_HM_Tolerance"/>
</dbReference>
<dbReference type="InterPro" id="IPR028144">
    <property type="entry name" value="CYSTM_dom"/>
</dbReference>
<dbReference type="PANTHER" id="PTHR35470">
    <property type="entry name" value="CADMIUM TOLERANT 3"/>
    <property type="match status" value="1"/>
</dbReference>
<dbReference type="PANTHER" id="PTHR35470:SF6">
    <property type="entry name" value="PROTEIN CYSTEINE-RICH TRANSMEMBRANE MODULE 2"/>
    <property type="match status" value="1"/>
</dbReference>
<dbReference type="Pfam" id="PF12734">
    <property type="entry name" value="CYSTM"/>
    <property type="match status" value="1"/>
</dbReference>
<feature type="chain" id="PRO_0000454812" description="Protein CADMIUM TOLERANCE 1">
    <location>
        <begin position="1"/>
        <end position="55"/>
    </location>
</feature>
<feature type="transmembrane region" description="Helical" evidence="2">
    <location>
        <begin position="24"/>
        <end position="40"/>
    </location>
</feature>
<organism>
    <name type="scientific">Miscanthus sinensis</name>
    <name type="common">Chinese silver grass</name>
    <name type="synonym">Saccharum japonicum</name>
    <dbReference type="NCBI Taxonomy" id="62337"/>
    <lineage>
        <taxon>Eukaryota</taxon>
        <taxon>Viridiplantae</taxon>
        <taxon>Streptophyta</taxon>
        <taxon>Embryophyta</taxon>
        <taxon>Tracheophyta</taxon>
        <taxon>Spermatophyta</taxon>
        <taxon>Magnoliopsida</taxon>
        <taxon>Liliopsida</taxon>
        <taxon>Poales</taxon>
        <taxon>Poaceae</taxon>
        <taxon>PACMAD clade</taxon>
        <taxon>Panicoideae</taxon>
        <taxon>Andropogonodae</taxon>
        <taxon>Andropogoneae</taxon>
        <taxon>Saccharinae</taxon>
        <taxon>Miscanthus</taxon>
    </lineage>
</organism>
<accession>B5BSU2</accession>
<reference key="1">
    <citation type="journal article" date="2009" name="Plant Cell Physiol.">
        <title>Novel cysteine-rich peptides from Digitaria ciliaris and Oryza sativa enhance tolerance to cadmium by limiting its cellular accumulation.</title>
        <authorList>
            <person name="Kuramata M."/>
            <person name="Masuya S."/>
            <person name="Takahashi Y."/>
            <person name="Kitagawa E."/>
            <person name="Inoue C."/>
            <person name="Ishikawa S."/>
            <person name="Youssefian S."/>
            <person name="Kusano T."/>
        </authorList>
    </citation>
    <scope>NUCLEOTIDE SEQUENCE [MRNA]</scope>
    <scope>GENE FAMILY</scope>
    <scope>NOMENCLATURE</scope>
</reference>
<reference key="2">
    <citation type="journal article" date="2009" name="Plant Signal. Behav.">
        <title>A novel plant cysteine-rich peptide family conferring cadmium tolerance to yeast and plants.</title>
        <authorList>
            <person name="Matsuda T."/>
            <person name="Kuramata M."/>
            <person name="Takahashi Y."/>
            <person name="Kitagawa E."/>
            <person name="Youssefian S."/>
            <person name="Kusano T."/>
        </authorList>
    </citation>
    <scope>GENE FAMILY</scope>
</reference>